<name>CHIT_ACTCC</name>
<evidence type="ECO:0000250" key="1">
    <source>
        <dbReference type="UniProtKB" id="P06215"/>
    </source>
</evidence>
<evidence type="ECO:0000255" key="2"/>
<evidence type="ECO:0000255" key="3">
    <source>
        <dbReference type="PROSITE-ProRule" id="PRU00261"/>
    </source>
</evidence>
<evidence type="ECO:0000269" key="4">
    <source>
    </source>
</evidence>
<evidence type="ECO:0000305" key="5"/>
<evidence type="ECO:0000312" key="6">
    <source>
        <dbReference type="EMBL" id="PSS31588.1"/>
    </source>
</evidence>
<accession>P86473</accession>
<accession>A0A2R6RNH9</accession>
<gene>
    <name evidence="6" type="ORF">CEY00_Acc04863</name>
</gene>
<feature type="signal peptide" evidence="4">
    <location>
        <begin position="1"/>
        <end position="21"/>
    </location>
</feature>
<feature type="chain" id="PRO_0000393867" description="Endochitinase">
    <location>
        <begin position="22"/>
        <end position="322"/>
    </location>
</feature>
<feature type="domain" description="Chitin-binding type-1" evidence="3">
    <location>
        <begin position="22"/>
        <end position="62"/>
    </location>
</feature>
<feature type="disulfide bond" evidence="3">
    <location>
        <begin position="24"/>
        <end position="39"/>
    </location>
</feature>
<feature type="disulfide bond" evidence="3">
    <location>
        <begin position="33"/>
        <end position="45"/>
    </location>
</feature>
<feature type="disulfide bond" evidence="3">
    <location>
        <begin position="38"/>
        <end position="52"/>
    </location>
</feature>
<feature type="disulfide bond" evidence="3">
    <location>
        <begin position="56"/>
        <end position="60"/>
    </location>
</feature>
<protein>
    <recommendedName>
        <fullName evidence="1">Endochitinase</fullName>
        <ecNumber>3.2.1.14</ecNumber>
    </recommendedName>
</protein>
<organism>
    <name type="scientific">Actinidia chinensis var. chinensis</name>
    <name type="common">Chinese soft-hair kiwi</name>
    <dbReference type="NCBI Taxonomy" id="1590841"/>
    <lineage>
        <taxon>Eukaryota</taxon>
        <taxon>Viridiplantae</taxon>
        <taxon>Streptophyta</taxon>
        <taxon>Embryophyta</taxon>
        <taxon>Tracheophyta</taxon>
        <taxon>Spermatophyta</taxon>
        <taxon>Magnoliopsida</taxon>
        <taxon>eudicotyledons</taxon>
        <taxon>Gunneridae</taxon>
        <taxon>Pentapetalae</taxon>
        <taxon>asterids</taxon>
        <taxon>Ericales</taxon>
        <taxon>Actinidiaceae</taxon>
        <taxon>Actinidia</taxon>
    </lineage>
</organism>
<comment type="function">
    <text evidence="1">Defense against chitin-containing fungal pathogens.</text>
</comment>
<comment type="catalytic activity">
    <reaction evidence="1">
        <text>Random endo-hydrolysis of N-acetyl-beta-D-glucosaminide (1-&gt;4)-beta-linkages in chitin and chitodextrins.</text>
        <dbReference type="EC" id="3.2.1.14"/>
    </reaction>
</comment>
<comment type="allergen">
    <text evidence="4">Causes an allergic reaction in human. Binds IgE.</text>
</comment>
<comment type="similarity">
    <text evidence="2">Belongs to the glycosyl hydrolase 19 family. Chitinase class I subfamily.</text>
</comment>
<sequence>MKMRYCVLVSVLAILVIRGSAENCGRQAGGALCPGGQCCSKWGWCGTTPDHCGTDCQSQCGGTPSPGPSGSDITNLIPRSTFDRMLLHRNDGACPGKNFYTYDGFIAAARSFGAFATTGDTDTRKREIAAFLAQTSHETTGGWASAPDGPYSWGYCFLREQGNPGAYCTPSAQWPCAPGRKYFGRGPIQITHNYNYGPAGKALGVDLLNNPDLVATDPAISFKTALWFWMTPQSPKPSCHDVITGRWTPSAADRSAGRLPGFGVITNIINGGLECGHGSDSRVQDRIGFYKRYCQIFGIGTGDNLDCGNQRSFGSGRLVDTM</sequence>
<keyword id="KW-0020">Allergen</keyword>
<keyword id="KW-0119">Carbohydrate metabolism</keyword>
<keyword id="KW-0146">Chitin degradation</keyword>
<keyword id="KW-0147">Chitin-binding</keyword>
<keyword id="KW-0903">Direct protein sequencing</keyword>
<keyword id="KW-1015">Disulfide bond</keyword>
<keyword id="KW-0326">Glycosidase</keyword>
<keyword id="KW-0378">Hydrolase</keyword>
<keyword id="KW-0611">Plant defense</keyword>
<keyword id="KW-0624">Polysaccharide degradation</keyword>
<keyword id="KW-1185">Reference proteome</keyword>
<keyword id="KW-0732">Signal</keyword>
<proteinExistence type="evidence at protein level"/>
<dbReference type="EC" id="3.2.1.14"/>
<dbReference type="EMBL" id="NKQK01000004">
    <property type="protein sequence ID" value="PSS31588.1"/>
    <property type="molecule type" value="Genomic_DNA"/>
</dbReference>
<dbReference type="SMR" id="P86473"/>
<dbReference type="FunCoup" id="P86473">
    <property type="interactions" value="289"/>
</dbReference>
<dbReference type="STRING" id="1590841.P86473"/>
<dbReference type="Allergome" id="2408">
    <property type="allergen name" value="Act c Chitinase_I"/>
</dbReference>
<dbReference type="EnsemblPlants" id="PSS31588">
    <property type="protein sequence ID" value="PSS31588"/>
    <property type="gene ID" value="CEY00_Acc04863"/>
</dbReference>
<dbReference type="Gramene" id="PSS31588">
    <property type="protein sequence ID" value="PSS31588"/>
    <property type="gene ID" value="CEY00_Acc04863"/>
</dbReference>
<dbReference type="InParanoid" id="P86473"/>
<dbReference type="OMA" id="GSDYCQP"/>
<dbReference type="OrthoDB" id="5985073at2759"/>
<dbReference type="Proteomes" id="UP000241394">
    <property type="component" value="Chromosome LG4"/>
</dbReference>
<dbReference type="GO" id="GO:0008061">
    <property type="term" value="F:chitin binding"/>
    <property type="evidence" value="ECO:0007669"/>
    <property type="project" value="UniProtKB-KW"/>
</dbReference>
<dbReference type="GO" id="GO:0008843">
    <property type="term" value="F:endochitinase activity"/>
    <property type="evidence" value="ECO:0007669"/>
    <property type="project" value="UniProtKB-EC"/>
</dbReference>
<dbReference type="GO" id="GO:0016998">
    <property type="term" value="P:cell wall macromolecule catabolic process"/>
    <property type="evidence" value="ECO:0007669"/>
    <property type="project" value="InterPro"/>
</dbReference>
<dbReference type="GO" id="GO:0006032">
    <property type="term" value="P:chitin catabolic process"/>
    <property type="evidence" value="ECO:0007669"/>
    <property type="project" value="UniProtKB-KW"/>
</dbReference>
<dbReference type="GO" id="GO:0006952">
    <property type="term" value="P:defense response"/>
    <property type="evidence" value="ECO:0007669"/>
    <property type="project" value="UniProtKB-KW"/>
</dbReference>
<dbReference type="GO" id="GO:0000272">
    <property type="term" value="P:polysaccharide catabolic process"/>
    <property type="evidence" value="ECO:0007669"/>
    <property type="project" value="UniProtKB-KW"/>
</dbReference>
<dbReference type="CDD" id="cd00325">
    <property type="entry name" value="chitinase_GH19"/>
    <property type="match status" value="1"/>
</dbReference>
<dbReference type="CDD" id="cd06921">
    <property type="entry name" value="ChtBD1_GH19_hevein"/>
    <property type="match status" value="1"/>
</dbReference>
<dbReference type="FunFam" id="3.30.20.10:FF:000001">
    <property type="entry name" value="Endochitinase (Chitinase)"/>
    <property type="match status" value="1"/>
</dbReference>
<dbReference type="Gene3D" id="1.10.530.10">
    <property type="match status" value="1"/>
</dbReference>
<dbReference type="Gene3D" id="3.30.20.10">
    <property type="entry name" value="Endochitinase, domain 2"/>
    <property type="match status" value="1"/>
</dbReference>
<dbReference type="Gene3D" id="3.30.60.10">
    <property type="entry name" value="Endochitinase-like"/>
    <property type="match status" value="1"/>
</dbReference>
<dbReference type="InterPro" id="IPR001002">
    <property type="entry name" value="Chitin-bd_1"/>
</dbReference>
<dbReference type="InterPro" id="IPR036861">
    <property type="entry name" value="Endochitinase-like_sf"/>
</dbReference>
<dbReference type="InterPro" id="IPR016283">
    <property type="entry name" value="Glyco_hydro_19"/>
</dbReference>
<dbReference type="InterPro" id="IPR000726">
    <property type="entry name" value="Glyco_hydro_19_cat"/>
</dbReference>
<dbReference type="InterPro" id="IPR023346">
    <property type="entry name" value="Lysozyme-like_dom_sf"/>
</dbReference>
<dbReference type="PANTHER" id="PTHR22595">
    <property type="entry name" value="CHITINASE-RELATED"/>
    <property type="match status" value="1"/>
</dbReference>
<dbReference type="PANTHER" id="PTHR22595:SF184">
    <property type="entry name" value="ENDOCHITINASE A"/>
    <property type="match status" value="1"/>
</dbReference>
<dbReference type="Pfam" id="PF00187">
    <property type="entry name" value="Chitin_bind_1"/>
    <property type="match status" value="1"/>
</dbReference>
<dbReference type="Pfam" id="PF00182">
    <property type="entry name" value="Glyco_hydro_19"/>
    <property type="match status" value="1"/>
</dbReference>
<dbReference type="PIRSF" id="PIRSF001060">
    <property type="entry name" value="Endochitinase"/>
    <property type="match status" value="1"/>
</dbReference>
<dbReference type="PRINTS" id="PR00451">
    <property type="entry name" value="CHITINBINDNG"/>
</dbReference>
<dbReference type="SMART" id="SM00270">
    <property type="entry name" value="ChtBD1"/>
    <property type="match status" value="1"/>
</dbReference>
<dbReference type="SUPFAM" id="SSF53955">
    <property type="entry name" value="Lysozyme-like"/>
    <property type="match status" value="1"/>
</dbReference>
<dbReference type="SUPFAM" id="SSF57016">
    <property type="entry name" value="Plant lectins/antimicrobial peptides"/>
    <property type="match status" value="1"/>
</dbReference>
<dbReference type="PROSITE" id="PS50941">
    <property type="entry name" value="CHIT_BIND_I_2"/>
    <property type="match status" value="1"/>
</dbReference>
<dbReference type="PROSITE" id="PS00773">
    <property type="entry name" value="CHITINASE_19_1"/>
    <property type="match status" value="1"/>
</dbReference>
<dbReference type="PROSITE" id="PS00774">
    <property type="entry name" value="CHITINASE_19_2"/>
    <property type="match status" value="1"/>
</dbReference>
<reference key="1">
    <citation type="journal article" date="2018" name="BMC Genomics">
        <title>A manually annotated Actinidia chinensis var. chinensis (kiwifruit) genome highlights the challenges associated with draft genomes and gene prediction in plants.</title>
        <authorList>
            <person name="Pilkington S.M."/>
            <person name="Crowhurst R."/>
            <person name="Hilario E."/>
            <person name="Nardozza S."/>
            <person name="Fraser L."/>
            <person name="Peng Y."/>
            <person name="Gunaseelan K."/>
            <person name="Simpson R."/>
            <person name="Tahir J."/>
            <person name="Deroles S.C."/>
            <person name="Templeton K."/>
            <person name="Luo Z."/>
            <person name="Davy M."/>
            <person name="Cheng C."/>
            <person name="McNeilage M."/>
            <person name="Scaglione D."/>
            <person name="Liu Y."/>
            <person name="Zhang Q."/>
            <person name="Datson P."/>
            <person name="De Silva N."/>
            <person name="Gardiner S.E."/>
            <person name="Bassett H."/>
            <person name="Chagne D."/>
            <person name="McCallum J."/>
            <person name="Dzierzon H."/>
            <person name="Deng C."/>
            <person name="Wang Y.Y."/>
            <person name="Barron L."/>
            <person name="Manako K."/>
            <person name="Bowen J."/>
            <person name="Foster T.M."/>
            <person name="Erridge Z.A."/>
            <person name="Tiffin H."/>
            <person name="Waite C.N."/>
            <person name="Davies K.M."/>
            <person name="Grierson E.P."/>
            <person name="Laing W.A."/>
            <person name="Kirk R."/>
            <person name="Chen X."/>
            <person name="Wood M."/>
            <person name="Montefiori M."/>
            <person name="Brummell D.A."/>
            <person name="Schwinn K.E."/>
            <person name="Catanach A."/>
            <person name="Fullerton C."/>
            <person name="Li D."/>
            <person name="Meiyalaghan S."/>
            <person name="Nieuwenhuizen N."/>
            <person name="Read N."/>
            <person name="Prakash R."/>
            <person name="Hunter D."/>
            <person name="Zhang H."/>
            <person name="McKenzie M."/>
            <person name="Knabel M."/>
            <person name="Harris A."/>
            <person name="Allan A.C."/>
            <person name="Gleave A."/>
            <person name="Chen A."/>
            <person name="Janssen B.J."/>
            <person name="Plunkett B."/>
            <person name="Ampomah-Dwamena C."/>
            <person name="Voogd C."/>
            <person name="Leif D."/>
            <person name="Lafferty D."/>
            <person name="Souleyre E.J.F."/>
            <person name="Varkonyi-Gasic E."/>
            <person name="Gambi F."/>
            <person name="Hanley J."/>
            <person name="Yao J.L."/>
            <person name="Cheung J."/>
            <person name="David K.M."/>
            <person name="Warren B."/>
            <person name="Marsh K."/>
            <person name="Snowden K.C."/>
            <person name="Lin-Wang K."/>
            <person name="Brian L."/>
            <person name="Martinez-Sanchez M."/>
            <person name="Wang M."/>
            <person name="Ileperuma N."/>
            <person name="Macnee N."/>
            <person name="Campin R."/>
            <person name="McAtee P."/>
            <person name="Drummond R.S.M."/>
            <person name="Espley R.V."/>
            <person name="Ireland H.S."/>
            <person name="Wu R."/>
            <person name="Atkinson R.G."/>
            <person name="Karunairetnam S."/>
            <person name="Bulley S."/>
            <person name="Chunkath S."/>
            <person name="Hanley Z."/>
            <person name="Storey R."/>
            <person name="Thrimawithana A.H."/>
            <person name="Thomson S."/>
            <person name="David C."/>
            <person name="Testolin R."/>
            <person name="Huang H."/>
            <person name="Hellens R.P."/>
            <person name="Schaffer R.J."/>
        </authorList>
    </citation>
    <scope>NUCLEOTIDE SEQUENCE [LARGE SCALE GENOMIC DNA]</scope>
    <source>
        <strain>cv. Red5</strain>
    </source>
</reference>
<reference evidence="5" key="2">
    <citation type="journal article" date="2004" name="J. Allergy Clin. Immunol.">
        <title>IgE sensitization profiles toward green and gold kiwifruits differ among patients allergic to kiwifruit from 3 European countries.</title>
        <authorList>
            <person name="Bublin M."/>
            <person name="Mari A."/>
            <person name="Ebner C."/>
            <person name="Knulst A."/>
            <person name="Scheiner O."/>
            <person name="Hoffmann-Sommergruber K."/>
            <person name="Breiteneder H."/>
            <person name="Radauer C."/>
        </authorList>
    </citation>
    <scope>PROTEIN SEQUENCE OF 22-29</scope>
    <scope>ALLERGEN</scope>
    <source>
        <strain evidence="4">cv. Hort 16A</strain>
        <tissue evidence="4">Fruit</tissue>
    </source>
</reference>